<organism>
    <name type="scientific">Orientia tsutsugamushi (strain Ikeda)</name>
    <name type="common">Rickettsia tsutsugamushi</name>
    <dbReference type="NCBI Taxonomy" id="334380"/>
    <lineage>
        <taxon>Bacteria</taxon>
        <taxon>Pseudomonadati</taxon>
        <taxon>Pseudomonadota</taxon>
        <taxon>Alphaproteobacteria</taxon>
        <taxon>Rickettsiales</taxon>
        <taxon>Rickettsiaceae</taxon>
        <taxon>Rickettsieae</taxon>
        <taxon>Orientia</taxon>
    </lineage>
</organism>
<name>RS11_ORITI</name>
<sequence>MYNAKTKKKRKNITLGIVYIKSTFNNTIVTFTDMQGNAIAALSAGAIGFKGAKKATPYAAQVIVEKVSEVAKEHGIKTLSIRIQGAGSQRESALRAIFNQNFIVTSITDTSPVAHNGCRPPKKRRV</sequence>
<proteinExistence type="inferred from homology"/>
<comment type="function">
    <text evidence="1">Located on the platform of the 30S subunit, it bridges several disparate RNA helices of the 16S rRNA. Forms part of the Shine-Dalgarno cleft in the 70S ribosome.</text>
</comment>
<comment type="subunit">
    <text evidence="1">Part of the 30S ribosomal subunit. Interacts with proteins S7 and S18. Binds to IF-3.</text>
</comment>
<comment type="similarity">
    <text evidence="1">Belongs to the universal ribosomal protein uS11 family.</text>
</comment>
<reference key="1">
    <citation type="journal article" date="2008" name="DNA Res.">
        <title>The whole-genome sequencing of the obligate intracellular bacterium Orientia tsutsugamushi revealed massive gene amplification during reductive genome evolution.</title>
        <authorList>
            <person name="Nakayama K."/>
            <person name="Yamashita A."/>
            <person name="Kurokawa K."/>
            <person name="Morimoto T."/>
            <person name="Ogawa M."/>
            <person name="Fukuhara M."/>
            <person name="Urakami H."/>
            <person name="Ohnishi M."/>
            <person name="Uchiyama I."/>
            <person name="Ogura Y."/>
            <person name="Ooka T."/>
            <person name="Oshima K."/>
            <person name="Tamura A."/>
            <person name="Hattori M."/>
            <person name="Hayashi T."/>
        </authorList>
    </citation>
    <scope>NUCLEOTIDE SEQUENCE [LARGE SCALE GENOMIC DNA]</scope>
    <source>
        <strain>Ikeda</strain>
    </source>
</reference>
<protein>
    <recommendedName>
        <fullName evidence="1">Small ribosomal subunit protein uS11</fullName>
    </recommendedName>
    <alternativeName>
        <fullName evidence="2">30S ribosomal protein S11</fullName>
    </alternativeName>
</protein>
<accession>B3CT28</accession>
<keyword id="KW-0687">Ribonucleoprotein</keyword>
<keyword id="KW-0689">Ribosomal protein</keyword>
<keyword id="KW-0694">RNA-binding</keyword>
<keyword id="KW-0699">rRNA-binding</keyword>
<gene>
    <name evidence="1" type="primary">rpsK</name>
    <name type="ordered locus">OTT_1067</name>
</gene>
<feature type="chain" id="PRO_1000141117" description="Small ribosomal subunit protein uS11">
    <location>
        <begin position="1"/>
        <end position="126"/>
    </location>
</feature>
<evidence type="ECO:0000255" key="1">
    <source>
        <dbReference type="HAMAP-Rule" id="MF_01310"/>
    </source>
</evidence>
<evidence type="ECO:0000305" key="2"/>
<dbReference type="EMBL" id="AP008981">
    <property type="protein sequence ID" value="BAG40525.1"/>
    <property type="molecule type" value="Genomic_DNA"/>
</dbReference>
<dbReference type="RefSeq" id="WP_011944418.1">
    <property type="nucleotide sequence ID" value="NC_010793.1"/>
</dbReference>
<dbReference type="SMR" id="B3CT28"/>
<dbReference type="KEGG" id="ott:OTT_1067"/>
<dbReference type="HOGENOM" id="CLU_072439_5_0_5"/>
<dbReference type="OrthoDB" id="9806415at2"/>
<dbReference type="Proteomes" id="UP000001033">
    <property type="component" value="Chromosome"/>
</dbReference>
<dbReference type="GO" id="GO:1990904">
    <property type="term" value="C:ribonucleoprotein complex"/>
    <property type="evidence" value="ECO:0007669"/>
    <property type="project" value="UniProtKB-KW"/>
</dbReference>
<dbReference type="GO" id="GO:0005840">
    <property type="term" value="C:ribosome"/>
    <property type="evidence" value="ECO:0007669"/>
    <property type="project" value="UniProtKB-KW"/>
</dbReference>
<dbReference type="GO" id="GO:0019843">
    <property type="term" value="F:rRNA binding"/>
    <property type="evidence" value="ECO:0007669"/>
    <property type="project" value="UniProtKB-UniRule"/>
</dbReference>
<dbReference type="GO" id="GO:0003735">
    <property type="term" value="F:structural constituent of ribosome"/>
    <property type="evidence" value="ECO:0007669"/>
    <property type="project" value="InterPro"/>
</dbReference>
<dbReference type="GO" id="GO:0006412">
    <property type="term" value="P:translation"/>
    <property type="evidence" value="ECO:0007669"/>
    <property type="project" value="UniProtKB-UniRule"/>
</dbReference>
<dbReference type="Gene3D" id="3.30.420.80">
    <property type="entry name" value="Ribosomal protein S11"/>
    <property type="match status" value="1"/>
</dbReference>
<dbReference type="HAMAP" id="MF_01310">
    <property type="entry name" value="Ribosomal_uS11"/>
    <property type="match status" value="1"/>
</dbReference>
<dbReference type="InterPro" id="IPR001971">
    <property type="entry name" value="Ribosomal_uS11"/>
</dbReference>
<dbReference type="InterPro" id="IPR019981">
    <property type="entry name" value="Ribosomal_uS11_bac-type"/>
</dbReference>
<dbReference type="InterPro" id="IPR036967">
    <property type="entry name" value="Ribosomal_uS11_sf"/>
</dbReference>
<dbReference type="NCBIfam" id="NF003698">
    <property type="entry name" value="PRK05309.1"/>
    <property type="match status" value="1"/>
</dbReference>
<dbReference type="NCBIfam" id="TIGR03632">
    <property type="entry name" value="uS11_bact"/>
    <property type="match status" value="1"/>
</dbReference>
<dbReference type="PANTHER" id="PTHR11759">
    <property type="entry name" value="40S RIBOSOMAL PROTEIN S14/30S RIBOSOMAL PROTEIN S11"/>
    <property type="match status" value="1"/>
</dbReference>
<dbReference type="Pfam" id="PF00411">
    <property type="entry name" value="Ribosomal_S11"/>
    <property type="match status" value="1"/>
</dbReference>
<dbReference type="PIRSF" id="PIRSF002131">
    <property type="entry name" value="Ribosomal_S11"/>
    <property type="match status" value="1"/>
</dbReference>
<dbReference type="SUPFAM" id="SSF53137">
    <property type="entry name" value="Translational machinery components"/>
    <property type="match status" value="1"/>
</dbReference>